<evidence type="ECO:0000255" key="1">
    <source>
        <dbReference type="HAMAP-Rule" id="MF_00281"/>
    </source>
</evidence>
<feature type="chain" id="PRO_1000204820" description="Phenylalanine--tRNA ligase alpha subunit">
    <location>
        <begin position="1"/>
        <end position="338"/>
    </location>
</feature>
<feature type="binding site" evidence="1">
    <location>
        <position position="252"/>
    </location>
    <ligand>
        <name>Mg(2+)</name>
        <dbReference type="ChEBI" id="CHEBI:18420"/>
        <note>shared with beta subunit</note>
    </ligand>
</feature>
<dbReference type="EC" id="6.1.1.20" evidence="1"/>
<dbReference type="EMBL" id="CP001157">
    <property type="protein sequence ID" value="ACO78249.1"/>
    <property type="molecule type" value="Genomic_DNA"/>
</dbReference>
<dbReference type="RefSeq" id="WP_012700658.1">
    <property type="nucleotide sequence ID" value="NC_012560.1"/>
</dbReference>
<dbReference type="SMR" id="C1DF46"/>
<dbReference type="STRING" id="322710.Avin_20460"/>
<dbReference type="EnsemblBacteria" id="ACO78249">
    <property type="protein sequence ID" value="ACO78249"/>
    <property type="gene ID" value="Avin_20460"/>
</dbReference>
<dbReference type="GeneID" id="88185277"/>
<dbReference type="KEGG" id="avn:Avin_20460"/>
<dbReference type="eggNOG" id="COG0016">
    <property type="taxonomic scope" value="Bacteria"/>
</dbReference>
<dbReference type="HOGENOM" id="CLU_025086_0_1_6"/>
<dbReference type="OrthoDB" id="9800719at2"/>
<dbReference type="Proteomes" id="UP000002424">
    <property type="component" value="Chromosome"/>
</dbReference>
<dbReference type="GO" id="GO:0005737">
    <property type="term" value="C:cytoplasm"/>
    <property type="evidence" value="ECO:0007669"/>
    <property type="project" value="UniProtKB-SubCell"/>
</dbReference>
<dbReference type="GO" id="GO:0005524">
    <property type="term" value="F:ATP binding"/>
    <property type="evidence" value="ECO:0007669"/>
    <property type="project" value="UniProtKB-UniRule"/>
</dbReference>
<dbReference type="GO" id="GO:0000287">
    <property type="term" value="F:magnesium ion binding"/>
    <property type="evidence" value="ECO:0007669"/>
    <property type="project" value="UniProtKB-UniRule"/>
</dbReference>
<dbReference type="GO" id="GO:0004826">
    <property type="term" value="F:phenylalanine-tRNA ligase activity"/>
    <property type="evidence" value="ECO:0007669"/>
    <property type="project" value="UniProtKB-UniRule"/>
</dbReference>
<dbReference type="GO" id="GO:0000049">
    <property type="term" value="F:tRNA binding"/>
    <property type="evidence" value="ECO:0007669"/>
    <property type="project" value="InterPro"/>
</dbReference>
<dbReference type="GO" id="GO:0006432">
    <property type="term" value="P:phenylalanyl-tRNA aminoacylation"/>
    <property type="evidence" value="ECO:0007669"/>
    <property type="project" value="UniProtKB-UniRule"/>
</dbReference>
<dbReference type="CDD" id="cd00496">
    <property type="entry name" value="PheRS_alpha_core"/>
    <property type="match status" value="1"/>
</dbReference>
<dbReference type="FunFam" id="3.30.930.10:FF:000003">
    <property type="entry name" value="Phenylalanine--tRNA ligase alpha subunit"/>
    <property type="match status" value="1"/>
</dbReference>
<dbReference type="Gene3D" id="3.30.930.10">
    <property type="entry name" value="Bira Bifunctional Protein, Domain 2"/>
    <property type="match status" value="1"/>
</dbReference>
<dbReference type="HAMAP" id="MF_00281">
    <property type="entry name" value="Phe_tRNA_synth_alpha1"/>
    <property type="match status" value="1"/>
</dbReference>
<dbReference type="InterPro" id="IPR006195">
    <property type="entry name" value="aa-tRNA-synth_II"/>
</dbReference>
<dbReference type="InterPro" id="IPR045864">
    <property type="entry name" value="aa-tRNA-synth_II/BPL/LPL"/>
</dbReference>
<dbReference type="InterPro" id="IPR004529">
    <property type="entry name" value="Phe-tRNA-synth_IIc_asu"/>
</dbReference>
<dbReference type="InterPro" id="IPR004188">
    <property type="entry name" value="Phe-tRNA_ligase_II_N"/>
</dbReference>
<dbReference type="InterPro" id="IPR022911">
    <property type="entry name" value="Phe_tRNA_ligase_alpha1_bac"/>
</dbReference>
<dbReference type="InterPro" id="IPR002319">
    <property type="entry name" value="Phenylalanyl-tRNA_Synthase"/>
</dbReference>
<dbReference type="InterPro" id="IPR010978">
    <property type="entry name" value="tRNA-bd_arm"/>
</dbReference>
<dbReference type="NCBIfam" id="TIGR00468">
    <property type="entry name" value="pheS"/>
    <property type="match status" value="1"/>
</dbReference>
<dbReference type="PANTHER" id="PTHR11538:SF41">
    <property type="entry name" value="PHENYLALANINE--TRNA LIGASE, MITOCHONDRIAL"/>
    <property type="match status" value="1"/>
</dbReference>
<dbReference type="PANTHER" id="PTHR11538">
    <property type="entry name" value="PHENYLALANYL-TRNA SYNTHETASE"/>
    <property type="match status" value="1"/>
</dbReference>
<dbReference type="Pfam" id="PF02912">
    <property type="entry name" value="Phe_tRNA-synt_N"/>
    <property type="match status" value="1"/>
</dbReference>
<dbReference type="Pfam" id="PF01409">
    <property type="entry name" value="tRNA-synt_2d"/>
    <property type="match status" value="1"/>
</dbReference>
<dbReference type="SUPFAM" id="SSF55681">
    <property type="entry name" value="Class II aaRS and biotin synthetases"/>
    <property type="match status" value="1"/>
</dbReference>
<dbReference type="SUPFAM" id="SSF46589">
    <property type="entry name" value="tRNA-binding arm"/>
    <property type="match status" value="1"/>
</dbReference>
<dbReference type="PROSITE" id="PS50862">
    <property type="entry name" value="AA_TRNA_LIGASE_II"/>
    <property type="match status" value="1"/>
</dbReference>
<organism>
    <name type="scientific">Azotobacter vinelandii (strain DJ / ATCC BAA-1303)</name>
    <dbReference type="NCBI Taxonomy" id="322710"/>
    <lineage>
        <taxon>Bacteria</taxon>
        <taxon>Pseudomonadati</taxon>
        <taxon>Pseudomonadota</taxon>
        <taxon>Gammaproteobacteria</taxon>
        <taxon>Pseudomonadales</taxon>
        <taxon>Pseudomonadaceae</taxon>
        <taxon>Azotobacter</taxon>
    </lineage>
</organism>
<name>SYFA_AZOVD</name>
<comment type="catalytic activity">
    <reaction evidence="1">
        <text>tRNA(Phe) + L-phenylalanine + ATP = L-phenylalanyl-tRNA(Phe) + AMP + diphosphate + H(+)</text>
        <dbReference type="Rhea" id="RHEA:19413"/>
        <dbReference type="Rhea" id="RHEA-COMP:9668"/>
        <dbReference type="Rhea" id="RHEA-COMP:9699"/>
        <dbReference type="ChEBI" id="CHEBI:15378"/>
        <dbReference type="ChEBI" id="CHEBI:30616"/>
        <dbReference type="ChEBI" id="CHEBI:33019"/>
        <dbReference type="ChEBI" id="CHEBI:58095"/>
        <dbReference type="ChEBI" id="CHEBI:78442"/>
        <dbReference type="ChEBI" id="CHEBI:78531"/>
        <dbReference type="ChEBI" id="CHEBI:456215"/>
        <dbReference type="EC" id="6.1.1.20"/>
    </reaction>
</comment>
<comment type="cofactor">
    <cofactor evidence="1">
        <name>Mg(2+)</name>
        <dbReference type="ChEBI" id="CHEBI:18420"/>
    </cofactor>
    <text evidence="1">Binds 2 magnesium ions per tetramer.</text>
</comment>
<comment type="subunit">
    <text evidence="1">Tetramer of two alpha and two beta subunits.</text>
</comment>
<comment type="subcellular location">
    <subcellularLocation>
        <location evidence="1">Cytoplasm</location>
    </subcellularLocation>
</comment>
<comment type="similarity">
    <text evidence="1">Belongs to the class-II aminoacyl-tRNA synthetase family. Phe-tRNA synthetase alpha subunit type 1 subfamily.</text>
</comment>
<accession>C1DF46</accession>
<protein>
    <recommendedName>
        <fullName evidence="1">Phenylalanine--tRNA ligase alpha subunit</fullName>
        <ecNumber evidence="1">6.1.1.20</ecNumber>
    </recommendedName>
    <alternativeName>
        <fullName evidence="1">Phenylalanyl-tRNA synthetase alpha subunit</fullName>
        <shortName evidence="1">PheRS</shortName>
    </alternativeName>
</protein>
<reference key="1">
    <citation type="journal article" date="2009" name="J. Bacteriol.">
        <title>Genome sequence of Azotobacter vinelandii, an obligate aerobe specialized to support diverse anaerobic metabolic processes.</title>
        <authorList>
            <person name="Setubal J.C."/>
            <person name="Dos Santos P."/>
            <person name="Goldman B.S."/>
            <person name="Ertesvaag H."/>
            <person name="Espin G."/>
            <person name="Rubio L.M."/>
            <person name="Valla S."/>
            <person name="Almeida N.F."/>
            <person name="Balasubramanian D."/>
            <person name="Cromes L."/>
            <person name="Curatti L."/>
            <person name="Du Z."/>
            <person name="Godsy E."/>
            <person name="Goodner B."/>
            <person name="Hellner-Burris K."/>
            <person name="Hernandez J.A."/>
            <person name="Houmiel K."/>
            <person name="Imperial J."/>
            <person name="Kennedy C."/>
            <person name="Larson T.J."/>
            <person name="Latreille P."/>
            <person name="Ligon L.S."/>
            <person name="Lu J."/>
            <person name="Maerk M."/>
            <person name="Miller N.M."/>
            <person name="Norton S."/>
            <person name="O'Carroll I.P."/>
            <person name="Paulsen I."/>
            <person name="Raulfs E.C."/>
            <person name="Roemer R."/>
            <person name="Rosser J."/>
            <person name="Segura D."/>
            <person name="Slater S."/>
            <person name="Stricklin S.L."/>
            <person name="Studholme D.J."/>
            <person name="Sun J."/>
            <person name="Viana C.J."/>
            <person name="Wallin E."/>
            <person name="Wang B."/>
            <person name="Wheeler C."/>
            <person name="Zhu H."/>
            <person name="Dean D.R."/>
            <person name="Dixon R."/>
            <person name="Wood D."/>
        </authorList>
    </citation>
    <scope>NUCLEOTIDE SEQUENCE [LARGE SCALE GENOMIC DNA]</scope>
    <source>
        <strain>DJ / ATCC BAA-1303</strain>
    </source>
</reference>
<gene>
    <name evidence="1" type="primary">pheS</name>
    <name type="ordered locus">Avin_20460</name>
</gene>
<proteinExistence type="inferred from homology"/>
<sequence length="338" mass="37738">MENLDALVAQALEAVQHSEDVNALEQLRVHYLGKKGELTQLMQTLGKLSAEERPKAGALINTAKNSVQEALNTRKADLESAALTAKLAAERIDVTLPGRGQASGGLHPVTRTLERVEQFFTRIGYSVAEGPEVEDDYHNFEALNIPGHHPARAMHDTFYFNANMLLRTHTSPVQVRTMESSQPPIRIVCPGRVYRCDSDITHSPMFHQVEGLLIDEGISFADLKGTIEEFLRVFFEKPLGVRFRPSFFPFTEPSAEVDMQCVICGGHGCRVCKHTGWLEVMGCGMVHPNVLGMSGIDPEKYQGFAFGMGVERLAMLRYGVNDLRLFFDNDLRFLAQFR</sequence>
<keyword id="KW-0030">Aminoacyl-tRNA synthetase</keyword>
<keyword id="KW-0067">ATP-binding</keyword>
<keyword id="KW-0963">Cytoplasm</keyword>
<keyword id="KW-0436">Ligase</keyword>
<keyword id="KW-0460">Magnesium</keyword>
<keyword id="KW-0479">Metal-binding</keyword>
<keyword id="KW-0547">Nucleotide-binding</keyword>
<keyword id="KW-0648">Protein biosynthesis</keyword>